<reference key="1">
    <citation type="journal article" date="2008" name="J. Bacteriol.">
        <title>Insights into the environmental resistance gene pool from the genome sequence of the multidrug-resistant environmental isolate Escherichia coli SMS-3-5.</title>
        <authorList>
            <person name="Fricke W.F."/>
            <person name="Wright M.S."/>
            <person name="Lindell A.H."/>
            <person name="Harkins D.M."/>
            <person name="Baker-Austin C."/>
            <person name="Ravel J."/>
            <person name="Stepanauskas R."/>
        </authorList>
    </citation>
    <scope>NUCLEOTIDE SEQUENCE [LARGE SCALE GENOMIC DNA]</scope>
    <source>
        <strain>SMS-3-5 / SECEC</strain>
    </source>
</reference>
<evidence type="ECO:0000255" key="1">
    <source>
        <dbReference type="HAMAP-Rule" id="MF_00475"/>
    </source>
</evidence>
<accession>B1LEK0</accession>
<organism>
    <name type="scientific">Escherichia coli (strain SMS-3-5 / SECEC)</name>
    <dbReference type="NCBI Taxonomy" id="439855"/>
    <lineage>
        <taxon>Bacteria</taxon>
        <taxon>Pseudomonadati</taxon>
        <taxon>Pseudomonadota</taxon>
        <taxon>Gammaproteobacteria</taxon>
        <taxon>Enterobacterales</taxon>
        <taxon>Enterobacteriaceae</taxon>
        <taxon>Escherichia</taxon>
    </lineage>
</organism>
<dbReference type="EMBL" id="CP000970">
    <property type="protein sequence ID" value="ACB15506.1"/>
    <property type="molecule type" value="Genomic_DNA"/>
</dbReference>
<dbReference type="RefSeq" id="WP_000068676.1">
    <property type="nucleotide sequence ID" value="NC_010498.1"/>
</dbReference>
<dbReference type="BMRB" id="B1LEK0"/>
<dbReference type="SMR" id="B1LEK0"/>
<dbReference type="KEGG" id="ecm:EcSMS35_4945"/>
<dbReference type="HOGENOM" id="CLU_147939_0_0_6"/>
<dbReference type="Proteomes" id="UP000007011">
    <property type="component" value="Chromosome"/>
</dbReference>
<dbReference type="GO" id="GO:0005737">
    <property type="term" value="C:cytoplasm"/>
    <property type="evidence" value="ECO:0007669"/>
    <property type="project" value="UniProtKB-SubCell"/>
</dbReference>
<dbReference type="GO" id="GO:0003700">
    <property type="term" value="F:DNA-binding transcription factor activity"/>
    <property type="evidence" value="ECO:0007669"/>
    <property type="project" value="InterPro"/>
</dbReference>
<dbReference type="GO" id="GO:0043565">
    <property type="term" value="F:sequence-specific DNA binding"/>
    <property type="evidence" value="ECO:0007669"/>
    <property type="project" value="InterPro"/>
</dbReference>
<dbReference type="GO" id="GO:0045892">
    <property type="term" value="P:negative regulation of DNA-templated transcription"/>
    <property type="evidence" value="ECO:0007669"/>
    <property type="project" value="UniProtKB-UniRule"/>
</dbReference>
<dbReference type="FunFam" id="1.10.1270.10:FF:000001">
    <property type="entry name" value="Trp operon repressor"/>
    <property type="match status" value="1"/>
</dbReference>
<dbReference type="Gene3D" id="1.10.1270.10">
    <property type="entry name" value="TrpR-like"/>
    <property type="match status" value="1"/>
</dbReference>
<dbReference type="HAMAP" id="MF_00475">
    <property type="entry name" value="Trp_repressor"/>
    <property type="match status" value="1"/>
</dbReference>
<dbReference type="InterPro" id="IPR000831">
    <property type="entry name" value="Trp_repress"/>
</dbReference>
<dbReference type="InterPro" id="IPR013335">
    <property type="entry name" value="Trp_repress_bac"/>
</dbReference>
<dbReference type="InterPro" id="IPR010921">
    <property type="entry name" value="Trp_repressor/repl_initiator"/>
</dbReference>
<dbReference type="InterPro" id="IPR038116">
    <property type="entry name" value="TrpR-like_sf"/>
</dbReference>
<dbReference type="NCBIfam" id="TIGR01321">
    <property type="entry name" value="TrpR"/>
    <property type="match status" value="1"/>
</dbReference>
<dbReference type="PANTHER" id="PTHR38025">
    <property type="entry name" value="TRP OPERON REPRESSOR"/>
    <property type="match status" value="1"/>
</dbReference>
<dbReference type="PANTHER" id="PTHR38025:SF1">
    <property type="entry name" value="TRP OPERON REPRESSOR"/>
    <property type="match status" value="1"/>
</dbReference>
<dbReference type="Pfam" id="PF01371">
    <property type="entry name" value="Trp_repressor"/>
    <property type="match status" value="1"/>
</dbReference>
<dbReference type="PIRSF" id="PIRSF003196">
    <property type="entry name" value="Trp_repressor"/>
    <property type="match status" value="1"/>
</dbReference>
<dbReference type="SUPFAM" id="SSF48295">
    <property type="entry name" value="TrpR-like"/>
    <property type="match status" value="1"/>
</dbReference>
<sequence length="108" mass="12391">MAQQSPYSAAMAEQRHQEWLRFVDLLKNAYQNDLHLPLLNLMLTPDEREALGTRVRIVEELLRGEMSQRELKNELGAGIATITRGSNSLKAAPVELRQWLEDVLLKDH</sequence>
<name>TRPR_ECOSM</name>
<feature type="chain" id="PRO_1000197143" description="Trp operon repressor">
    <location>
        <begin position="1"/>
        <end position="108"/>
    </location>
</feature>
<feature type="DNA-binding region" evidence="1">
    <location>
        <begin position="68"/>
        <end position="91"/>
    </location>
</feature>
<protein>
    <recommendedName>
        <fullName evidence="1">Trp operon repressor</fullName>
    </recommendedName>
</protein>
<keyword id="KW-0963">Cytoplasm</keyword>
<keyword id="KW-0238">DNA-binding</keyword>
<keyword id="KW-0678">Repressor</keyword>
<keyword id="KW-0804">Transcription</keyword>
<keyword id="KW-0805">Transcription regulation</keyword>
<proteinExistence type="inferred from homology"/>
<gene>
    <name evidence="1" type="primary">trpR</name>
    <name type="ordered locus">EcSMS35_4945</name>
</gene>
<comment type="function">
    <text evidence="1">This protein is an aporepressor. When complexed with L-tryptophan it binds the operator region of the trp operon (5'-ACTAGT-'3') and prevents the initiation of transcription. The complex also regulates trp repressor biosynthesis by binding to its regulatory region.</text>
</comment>
<comment type="subunit">
    <text evidence="1">Homodimer.</text>
</comment>
<comment type="subcellular location">
    <subcellularLocation>
        <location evidence="1">Cytoplasm</location>
    </subcellularLocation>
</comment>
<comment type="similarity">
    <text evidence="1">Belongs to the TrpR family.</text>
</comment>